<gene>
    <name evidence="1" type="primary">lipA</name>
    <name type="ordered locus">EcSMS35_0648</name>
</gene>
<proteinExistence type="inferred from homology"/>
<reference key="1">
    <citation type="journal article" date="2008" name="J. Bacteriol.">
        <title>Insights into the environmental resistance gene pool from the genome sequence of the multidrug-resistant environmental isolate Escherichia coli SMS-3-5.</title>
        <authorList>
            <person name="Fricke W.F."/>
            <person name="Wright M.S."/>
            <person name="Lindell A.H."/>
            <person name="Harkins D.M."/>
            <person name="Baker-Austin C."/>
            <person name="Ravel J."/>
            <person name="Stepanauskas R."/>
        </authorList>
    </citation>
    <scope>NUCLEOTIDE SEQUENCE [LARGE SCALE GENOMIC DNA]</scope>
    <source>
        <strain>SMS-3-5 / SECEC</strain>
    </source>
</reference>
<accession>B1LKL9</accession>
<protein>
    <recommendedName>
        <fullName evidence="1">Lipoyl synthase</fullName>
        <ecNumber evidence="1">2.8.1.8</ecNumber>
    </recommendedName>
    <alternativeName>
        <fullName evidence="1">Lip-syn</fullName>
        <shortName evidence="1">LS</shortName>
    </alternativeName>
    <alternativeName>
        <fullName evidence="1">Lipoate synthase</fullName>
    </alternativeName>
    <alternativeName>
        <fullName evidence="1">Lipoic acid synthase</fullName>
    </alternativeName>
    <alternativeName>
        <fullName evidence="1">Sulfur insertion protein LipA</fullName>
    </alternativeName>
</protein>
<keyword id="KW-0004">4Fe-4S</keyword>
<keyword id="KW-0963">Cytoplasm</keyword>
<keyword id="KW-0408">Iron</keyword>
<keyword id="KW-0411">Iron-sulfur</keyword>
<keyword id="KW-0479">Metal-binding</keyword>
<keyword id="KW-0949">S-adenosyl-L-methionine</keyword>
<keyword id="KW-0808">Transferase</keyword>
<organism>
    <name type="scientific">Escherichia coli (strain SMS-3-5 / SECEC)</name>
    <dbReference type="NCBI Taxonomy" id="439855"/>
    <lineage>
        <taxon>Bacteria</taxon>
        <taxon>Pseudomonadati</taxon>
        <taxon>Pseudomonadota</taxon>
        <taxon>Gammaproteobacteria</taxon>
        <taxon>Enterobacterales</taxon>
        <taxon>Enterobacteriaceae</taxon>
        <taxon>Escherichia</taxon>
    </lineage>
</organism>
<dbReference type="EC" id="2.8.1.8" evidence="1"/>
<dbReference type="EMBL" id="CP000970">
    <property type="protein sequence ID" value="ACB17196.1"/>
    <property type="molecule type" value="Genomic_DNA"/>
</dbReference>
<dbReference type="RefSeq" id="WP_000042632.1">
    <property type="nucleotide sequence ID" value="NC_010498.1"/>
</dbReference>
<dbReference type="SMR" id="B1LKL9"/>
<dbReference type="GeneID" id="93776854"/>
<dbReference type="KEGG" id="ecm:EcSMS35_0648"/>
<dbReference type="HOGENOM" id="CLU_033144_2_1_6"/>
<dbReference type="UniPathway" id="UPA00538">
    <property type="reaction ID" value="UER00593"/>
</dbReference>
<dbReference type="Proteomes" id="UP000007011">
    <property type="component" value="Chromosome"/>
</dbReference>
<dbReference type="GO" id="GO:0005737">
    <property type="term" value="C:cytoplasm"/>
    <property type="evidence" value="ECO:0007669"/>
    <property type="project" value="UniProtKB-SubCell"/>
</dbReference>
<dbReference type="GO" id="GO:0051539">
    <property type="term" value="F:4 iron, 4 sulfur cluster binding"/>
    <property type="evidence" value="ECO:0007669"/>
    <property type="project" value="UniProtKB-UniRule"/>
</dbReference>
<dbReference type="GO" id="GO:0016992">
    <property type="term" value="F:lipoate synthase activity"/>
    <property type="evidence" value="ECO:0007669"/>
    <property type="project" value="UniProtKB-UniRule"/>
</dbReference>
<dbReference type="GO" id="GO:0046872">
    <property type="term" value="F:metal ion binding"/>
    <property type="evidence" value="ECO:0007669"/>
    <property type="project" value="UniProtKB-KW"/>
</dbReference>
<dbReference type="CDD" id="cd01335">
    <property type="entry name" value="Radical_SAM"/>
    <property type="match status" value="1"/>
</dbReference>
<dbReference type="FunFam" id="3.20.20.70:FF:000023">
    <property type="entry name" value="Lipoyl synthase"/>
    <property type="match status" value="1"/>
</dbReference>
<dbReference type="Gene3D" id="3.20.20.70">
    <property type="entry name" value="Aldolase class I"/>
    <property type="match status" value="1"/>
</dbReference>
<dbReference type="HAMAP" id="MF_00206">
    <property type="entry name" value="Lipoyl_synth"/>
    <property type="match status" value="1"/>
</dbReference>
<dbReference type="InterPro" id="IPR013785">
    <property type="entry name" value="Aldolase_TIM"/>
</dbReference>
<dbReference type="InterPro" id="IPR006638">
    <property type="entry name" value="Elp3/MiaA/NifB-like_rSAM"/>
</dbReference>
<dbReference type="InterPro" id="IPR031691">
    <property type="entry name" value="LIAS_N"/>
</dbReference>
<dbReference type="InterPro" id="IPR003698">
    <property type="entry name" value="Lipoyl_synth"/>
</dbReference>
<dbReference type="InterPro" id="IPR007197">
    <property type="entry name" value="rSAM"/>
</dbReference>
<dbReference type="NCBIfam" id="TIGR00510">
    <property type="entry name" value="lipA"/>
    <property type="match status" value="1"/>
</dbReference>
<dbReference type="NCBIfam" id="NF004019">
    <property type="entry name" value="PRK05481.1"/>
    <property type="match status" value="1"/>
</dbReference>
<dbReference type="NCBIfam" id="NF009544">
    <property type="entry name" value="PRK12928.1"/>
    <property type="match status" value="1"/>
</dbReference>
<dbReference type="PANTHER" id="PTHR10949">
    <property type="entry name" value="LIPOYL SYNTHASE"/>
    <property type="match status" value="1"/>
</dbReference>
<dbReference type="PANTHER" id="PTHR10949:SF0">
    <property type="entry name" value="LIPOYL SYNTHASE, MITOCHONDRIAL"/>
    <property type="match status" value="1"/>
</dbReference>
<dbReference type="Pfam" id="PF16881">
    <property type="entry name" value="LIAS_N"/>
    <property type="match status" value="1"/>
</dbReference>
<dbReference type="Pfam" id="PF04055">
    <property type="entry name" value="Radical_SAM"/>
    <property type="match status" value="1"/>
</dbReference>
<dbReference type="PIRSF" id="PIRSF005963">
    <property type="entry name" value="Lipoyl_synth"/>
    <property type="match status" value="1"/>
</dbReference>
<dbReference type="SFLD" id="SFLDF00271">
    <property type="entry name" value="lipoyl_synthase"/>
    <property type="match status" value="1"/>
</dbReference>
<dbReference type="SFLD" id="SFLDG01058">
    <property type="entry name" value="lipoyl_synthase_like"/>
    <property type="match status" value="1"/>
</dbReference>
<dbReference type="SMART" id="SM00729">
    <property type="entry name" value="Elp3"/>
    <property type="match status" value="1"/>
</dbReference>
<dbReference type="SUPFAM" id="SSF102114">
    <property type="entry name" value="Radical SAM enzymes"/>
    <property type="match status" value="1"/>
</dbReference>
<dbReference type="PROSITE" id="PS51918">
    <property type="entry name" value="RADICAL_SAM"/>
    <property type="match status" value="1"/>
</dbReference>
<name>LIPA_ECOSM</name>
<sequence>MSKPIVMERGVKYRDADKMALIPVKNVATEREALLRKPEWMKIKLPADSTRIQGIKAAMRKNGLHSVCEEASCPNLAECFNHGTATFMILGAICTRRCPFCDVAHGRPVAPDANEPVKLAQTIADMALRYVVITSVDRDDLRDGGAQHFADCITAIREKSPQIKIETLVPDFRGRMDRALDILTATPPDVFNHNLENVPRIYRQVRPGADYNWSLKLLERFKEAHPEIPTKSGLMVGLGETNEEIIEVMRDLRRHGVTMLTLGQYLQPSRHHLPVQRYVSPDEFDEMKAEALAMGFTHAACGPFVRSSYHADLQAKGMEVK</sequence>
<evidence type="ECO:0000255" key="1">
    <source>
        <dbReference type="HAMAP-Rule" id="MF_00206"/>
    </source>
</evidence>
<evidence type="ECO:0000255" key="2">
    <source>
        <dbReference type="PROSITE-ProRule" id="PRU01266"/>
    </source>
</evidence>
<comment type="function">
    <text evidence="1">Catalyzes the radical-mediated insertion of two sulfur atoms into the C-6 and C-8 positions of the octanoyl moiety bound to the lipoyl domains of lipoate-dependent enzymes, thereby converting the octanoylated domains into lipoylated derivatives.</text>
</comment>
<comment type="catalytic activity">
    <reaction evidence="1">
        <text>[[Fe-S] cluster scaffold protein carrying a second [4Fe-4S](2+) cluster] + N(6)-octanoyl-L-lysyl-[protein] + 2 oxidized [2Fe-2S]-[ferredoxin] + 2 S-adenosyl-L-methionine + 4 H(+) = [[Fe-S] cluster scaffold protein] + N(6)-[(R)-dihydrolipoyl]-L-lysyl-[protein] + 4 Fe(3+) + 2 hydrogen sulfide + 2 5'-deoxyadenosine + 2 L-methionine + 2 reduced [2Fe-2S]-[ferredoxin]</text>
        <dbReference type="Rhea" id="RHEA:16585"/>
        <dbReference type="Rhea" id="RHEA-COMP:9928"/>
        <dbReference type="Rhea" id="RHEA-COMP:10000"/>
        <dbReference type="Rhea" id="RHEA-COMP:10001"/>
        <dbReference type="Rhea" id="RHEA-COMP:10475"/>
        <dbReference type="Rhea" id="RHEA-COMP:14568"/>
        <dbReference type="Rhea" id="RHEA-COMP:14569"/>
        <dbReference type="ChEBI" id="CHEBI:15378"/>
        <dbReference type="ChEBI" id="CHEBI:17319"/>
        <dbReference type="ChEBI" id="CHEBI:29034"/>
        <dbReference type="ChEBI" id="CHEBI:29919"/>
        <dbReference type="ChEBI" id="CHEBI:33722"/>
        <dbReference type="ChEBI" id="CHEBI:33737"/>
        <dbReference type="ChEBI" id="CHEBI:33738"/>
        <dbReference type="ChEBI" id="CHEBI:57844"/>
        <dbReference type="ChEBI" id="CHEBI:59789"/>
        <dbReference type="ChEBI" id="CHEBI:78809"/>
        <dbReference type="ChEBI" id="CHEBI:83100"/>
        <dbReference type="EC" id="2.8.1.8"/>
    </reaction>
</comment>
<comment type="cofactor">
    <cofactor evidence="1">
        <name>[4Fe-4S] cluster</name>
        <dbReference type="ChEBI" id="CHEBI:49883"/>
    </cofactor>
    <text evidence="1">Binds 2 [4Fe-4S] clusters per subunit. One cluster is coordinated with 3 cysteines and an exchangeable S-adenosyl-L-methionine.</text>
</comment>
<comment type="pathway">
    <text evidence="1">Protein modification; protein lipoylation via endogenous pathway; protein N(6)-(lipoyl)lysine from octanoyl-[acyl-carrier-protein]: step 2/2.</text>
</comment>
<comment type="subcellular location">
    <subcellularLocation>
        <location evidence="1">Cytoplasm</location>
    </subcellularLocation>
</comment>
<comment type="similarity">
    <text evidence="1">Belongs to the radical SAM superfamily. Lipoyl synthase family.</text>
</comment>
<feature type="chain" id="PRO_1000191448" description="Lipoyl synthase">
    <location>
        <begin position="1"/>
        <end position="321"/>
    </location>
</feature>
<feature type="domain" description="Radical SAM core" evidence="2">
    <location>
        <begin position="80"/>
        <end position="297"/>
    </location>
</feature>
<feature type="binding site" evidence="1">
    <location>
        <position position="68"/>
    </location>
    <ligand>
        <name>[4Fe-4S] cluster</name>
        <dbReference type="ChEBI" id="CHEBI:49883"/>
        <label>1</label>
    </ligand>
</feature>
<feature type="binding site" evidence="1">
    <location>
        <position position="73"/>
    </location>
    <ligand>
        <name>[4Fe-4S] cluster</name>
        <dbReference type="ChEBI" id="CHEBI:49883"/>
        <label>1</label>
    </ligand>
</feature>
<feature type="binding site" evidence="1">
    <location>
        <position position="79"/>
    </location>
    <ligand>
        <name>[4Fe-4S] cluster</name>
        <dbReference type="ChEBI" id="CHEBI:49883"/>
        <label>1</label>
    </ligand>
</feature>
<feature type="binding site" evidence="1">
    <location>
        <position position="94"/>
    </location>
    <ligand>
        <name>[4Fe-4S] cluster</name>
        <dbReference type="ChEBI" id="CHEBI:49883"/>
        <label>2</label>
        <note>4Fe-4S-S-AdoMet</note>
    </ligand>
</feature>
<feature type="binding site" evidence="1">
    <location>
        <position position="98"/>
    </location>
    <ligand>
        <name>[4Fe-4S] cluster</name>
        <dbReference type="ChEBI" id="CHEBI:49883"/>
        <label>2</label>
        <note>4Fe-4S-S-AdoMet</note>
    </ligand>
</feature>
<feature type="binding site" evidence="1">
    <location>
        <position position="101"/>
    </location>
    <ligand>
        <name>[4Fe-4S] cluster</name>
        <dbReference type="ChEBI" id="CHEBI:49883"/>
        <label>2</label>
        <note>4Fe-4S-S-AdoMet</note>
    </ligand>
</feature>
<feature type="binding site" evidence="1">
    <location>
        <position position="308"/>
    </location>
    <ligand>
        <name>[4Fe-4S] cluster</name>
        <dbReference type="ChEBI" id="CHEBI:49883"/>
        <label>1</label>
    </ligand>
</feature>